<evidence type="ECO:0000255" key="1">
    <source>
        <dbReference type="PROSITE-ProRule" id="PRU00190"/>
    </source>
</evidence>
<evidence type="ECO:0000269" key="2">
    <source>
    </source>
</evidence>
<evidence type="ECO:0000269" key="3">
    <source>
    </source>
</evidence>
<evidence type="ECO:0000269" key="4">
    <source>
    </source>
</evidence>
<evidence type="ECO:0000269" key="5">
    <source>
    </source>
</evidence>
<evidence type="ECO:0000303" key="6">
    <source>
    </source>
</evidence>
<evidence type="ECO:0000303" key="7">
    <source>
    </source>
</evidence>
<evidence type="ECO:0000305" key="8"/>
<evidence type="ECO:0000312" key="9">
    <source>
        <dbReference type="EMBL" id="CAA86307.1"/>
    </source>
</evidence>
<evidence type="ECO:0000312" key="10">
    <source>
        <dbReference type="SGD" id="S000002665"/>
    </source>
</evidence>
<reference evidence="8" key="1">
    <citation type="submission" date="1994-10" db="EMBL/GenBank/DDBJ databases">
        <title>Characterization of RMS1 gene.</title>
        <authorList>
            <person name="Pavlik P."/>
        </authorList>
    </citation>
    <scope>NUCLEOTIDE SEQUENCE [GENOMIC DNA]</scope>
</reference>
<reference evidence="8" key="2">
    <citation type="journal article" date="1997" name="Nature">
        <title>The nucleotide sequence of Saccharomyces cerevisiae chromosome IV.</title>
        <authorList>
            <person name="Jacq C."/>
            <person name="Alt-Moerbe J."/>
            <person name="Andre B."/>
            <person name="Arnold W."/>
            <person name="Bahr A."/>
            <person name="Ballesta J.P.G."/>
            <person name="Bargues M."/>
            <person name="Baron L."/>
            <person name="Becker A."/>
            <person name="Biteau N."/>
            <person name="Bloecker H."/>
            <person name="Blugeon C."/>
            <person name="Boskovic J."/>
            <person name="Brandt P."/>
            <person name="Brueckner M."/>
            <person name="Buitrago M.J."/>
            <person name="Coster F."/>
            <person name="Delaveau T."/>
            <person name="del Rey F."/>
            <person name="Dujon B."/>
            <person name="Eide L.G."/>
            <person name="Garcia-Cantalejo J.M."/>
            <person name="Goffeau A."/>
            <person name="Gomez-Peris A."/>
            <person name="Granotier C."/>
            <person name="Hanemann V."/>
            <person name="Hankeln T."/>
            <person name="Hoheisel J.D."/>
            <person name="Jaeger W."/>
            <person name="Jimenez A."/>
            <person name="Jonniaux J.-L."/>
            <person name="Kraemer C."/>
            <person name="Kuester H."/>
            <person name="Laamanen P."/>
            <person name="Legros Y."/>
            <person name="Louis E.J."/>
            <person name="Moeller-Rieker S."/>
            <person name="Monnet A."/>
            <person name="Moro M."/>
            <person name="Mueller-Auer S."/>
            <person name="Nussbaumer B."/>
            <person name="Paricio N."/>
            <person name="Paulin L."/>
            <person name="Perea J."/>
            <person name="Perez-Alonso M."/>
            <person name="Perez-Ortin J.E."/>
            <person name="Pohl T.M."/>
            <person name="Prydz H."/>
            <person name="Purnelle B."/>
            <person name="Rasmussen S.W."/>
            <person name="Remacha M.A."/>
            <person name="Revuelta J.L."/>
            <person name="Rieger M."/>
            <person name="Salom D."/>
            <person name="Saluz H.P."/>
            <person name="Saiz J.E."/>
            <person name="Saren A.-M."/>
            <person name="Schaefer M."/>
            <person name="Scharfe M."/>
            <person name="Schmidt E.R."/>
            <person name="Schneider C."/>
            <person name="Scholler P."/>
            <person name="Schwarz S."/>
            <person name="Soler-Mira A."/>
            <person name="Urrestarazu L.A."/>
            <person name="Verhasselt P."/>
            <person name="Vissers S."/>
            <person name="Voet M."/>
            <person name="Volckaert G."/>
            <person name="Wagner G."/>
            <person name="Wambutt R."/>
            <person name="Wedler E."/>
            <person name="Wedler H."/>
            <person name="Woelfl S."/>
            <person name="Harris D.E."/>
            <person name="Bowman S."/>
            <person name="Brown D."/>
            <person name="Churcher C.M."/>
            <person name="Connor R."/>
            <person name="Dedman K."/>
            <person name="Gentles S."/>
            <person name="Hamlin N."/>
            <person name="Hunt S."/>
            <person name="Jones L."/>
            <person name="McDonald S."/>
            <person name="Murphy L.D."/>
            <person name="Niblett D."/>
            <person name="Odell C."/>
            <person name="Oliver K."/>
            <person name="Rajandream M.A."/>
            <person name="Richards C."/>
            <person name="Shore L."/>
            <person name="Walsh S.V."/>
            <person name="Barrell B.G."/>
            <person name="Dietrich F.S."/>
            <person name="Mulligan J.T."/>
            <person name="Allen E."/>
            <person name="Araujo R."/>
            <person name="Aviles E."/>
            <person name="Berno A."/>
            <person name="Carpenter J."/>
            <person name="Chen E."/>
            <person name="Cherry J.M."/>
            <person name="Chung E."/>
            <person name="Duncan M."/>
            <person name="Hunicke-Smith S."/>
            <person name="Hyman R.W."/>
            <person name="Komp C."/>
            <person name="Lashkari D."/>
            <person name="Lew H."/>
            <person name="Lin D."/>
            <person name="Mosedale D."/>
            <person name="Nakahara K."/>
            <person name="Namath A."/>
            <person name="Oefner P."/>
            <person name="Oh C."/>
            <person name="Petel F.X."/>
            <person name="Roberts D."/>
            <person name="Schramm S."/>
            <person name="Schroeder M."/>
            <person name="Shogren T."/>
            <person name="Shroff N."/>
            <person name="Winant A."/>
            <person name="Yelton M.A."/>
            <person name="Botstein D."/>
            <person name="Davis R.W."/>
            <person name="Johnston M."/>
            <person name="Andrews S."/>
            <person name="Brinkman R."/>
            <person name="Cooper J."/>
            <person name="Ding H."/>
            <person name="Du Z."/>
            <person name="Favello A."/>
            <person name="Fulton L."/>
            <person name="Gattung S."/>
            <person name="Greco T."/>
            <person name="Hallsworth K."/>
            <person name="Hawkins J."/>
            <person name="Hillier L.W."/>
            <person name="Jier M."/>
            <person name="Johnson D."/>
            <person name="Johnston L."/>
            <person name="Kirsten J."/>
            <person name="Kucaba T."/>
            <person name="Langston Y."/>
            <person name="Latreille P."/>
            <person name="Le T."/>
            <person name="Mardis E."/>
            <person name="Menezes S."/>
            <person name="Miller N."/>
            <person name="Nhan M."/>
            <person name="Pauley A."/>
            <person name="Peluso D."/>
            <person name="Rifkin L."/>
            <person name="Riles L."/>
            <person name="Taich A."/>
            <person name="Trevaskis E."/>
            <person name="Vignati D."/>
            <person name="Wilcox L."/>
            <person name="Wohldman P."/>
            <person name="Vaudin M."/>
            <person name="Wilson R."/>
            <person name="Waterston R."/>
            <person name="Albermann K."/>
            <person name="Hani J."/>
            <person name="Heumann K."/>
            <person name="Kleine K."/>
            <person name="Mewes H.-W."/>
            <person name="Zollner A."/>
            <person name="Zaccaria P."/>
        </authorList>
    </citation>
    <scope>NUCLEOTIDE SEQUENCE [LARGE SCALE GENOMIC DNA]</scope>
    <source>
        <strain>ATCC 204508 / S288c</strain>
    </source>
</reference>
<reference key="3">
    <citation type="journal article" date="2014" name="G3 (Bethesda)">
        <title>The reference genome sequence of Saccharomyces cerevisiae: Then and now.</title>
        <authorList>
            <person name="Engel S.R."/>
            <person name="Dietrich F.S."/>
            <person name="Fisk D.G."/>
            <person name="Binkley G."/>
            <person name="Balakrishnan R."/>
            <person name="Costanzo M.C."/>
            <person name="Dwight S.S."/>
            <person name="Hitz B.C."/>
            <person name="Karra K."/>
            <person name="Nash R.S."/>
            <person name="Weng S."/>
            <person name="Wong E.D."/>
            <person name="Lloyd P."/>
            <person name="Skrzypek M.S."/>
            <person name="Miyasato S.R."/>
            <person name="Simison M."/>
            <person name="Cherry J.M."/>
        </authorList>
    </citation>
    <scope>GENOME REANNOTATION</scope>
    <source>
        <strain>ATCC 204508 / S288c</strain>
    </source>
</reference>
<reference key="4">
    <citation type="journal article" date="2007" name="Genome Res.">
        <title>Approaching a complete repository of sequence-verified protein-encoding clones for Saccharomyces cerevisiae.</title>
        <authorList>
            <person name="Hu Y."/>
            <person name="Rolfs A."/>
            <person name="Bhullar B."/>
            <person name="Murthy T.V.S."/>
            <person name="Zhu C."/>
            <person name="Berger M.F."/>
            <person name="Camargo A.A."/>
            <person name="Kelley F."/>
            <person name="McCarron S."/>
            <person name="Jepson D."/>
            <person name="Richardson A."/>
            <person name="Raphael J."/>
            <person name="Moreira D."/>
            <person name="Taycher E."/>
            <person name="Zuo D."/>
            <person name="Mohr S."/>
            <person name="Kane M.F."/>
            <person name="Williamson J."/>
            <person name="Simpson A.J.G."/>
            <person name="Bulyk M.L."/>
            <person name="Harlow E."/>
            <person name="Marsischky G."/>
            <person name="Kolodner R.D."/>
            <person name="LaBaer J."/>
        </authorList>
    </citation>
    <scope>NUCLEOTIDE SEQUENCE [GENOMIC DNA]</scope>
    <source>
        <strain>ATCC 204508 / S288c</strain>
    </source>
</reference>
<reference evidence="8" key="5">
    <citation type="journal article" date="1993" name="Mol. Cell. Biol.">
        <title>HSP78 encodes a yeast mitochondrial heat shock protein in the Clp family of ATP-dependent proteases.</title>
        <authorList>
            <person name="Leonhardt S.A."/>
            <person name="Fearon K."/>
            <person name="Danese P.N."/>
            <person name="Mason T.L."/>
        </authorList>
    </citation>
    <scope>NUCLEOTIDE SEQUENCE [GENOMIC DNA] OF 1-32</scope>
</reference>
<reference evidence="8" key="6">
    <citation type="journal article" date="2003" name="Nature">
        <title>Global analysis of protein localization in budding yeast.</title>
        <authorList>
            <person name="Huh W.-K."/>
            <person name="Falvo J.V."/>
            <person name="Gerke L.C."/>
            <person name="Carroll A.S."/>
            <person name="Howson R.W."/>
            <person name="Weissman J.S."/>
            <person name="O'Shea E.K."/>
        </authorList>
    </citation>
    <scope>SUBCELLULAR LOCATION [LARGE SCALE ANALYSIS]</scope>
</reference>
<reference key="7">
    <citation type="journal article" date="2003" name="Nature">
        <title>Global analysis of protein expression in yeast.</title>
        <authorList>
            <person name="Ghaemmaghami S."/>
            <person name="Huh W.-K."/>
            <person name="Bower K."/>
            <person name="Howson R.W."/>
            <person name="Belle A."/>
            <person name="Dephoure N."/>
            <person name="O'Shea E.K."/>
            <person name="Weissman J.S."/>
        </authorList>
    </citation>
    <scope>LEVEL OF PROTEIN EXPRESSION [LARGE SCALE ANALYSIS]</scope>
</reference>
<reference key="8">
    <citation type="journal article" date="2005" name="J. Biol. Chem.">
        <title>A novel SET domain methyltransferase modifies ribosomal protein Rpl23ab in yeast.</title>
        <authorList>
            <person name="Porras-Yakushi T.R."/>
            <person name="Whitelegge J.P."/>
            <person name="Miranda T.B."/>
            <person name="Clarke S."/>
        </authorList>
    </citation>
    <scope>GENE NAME</scope>
</reference>
<reference key="9">
    <citation type="journal article" date="2008" name="J. Biol. Chem.">
        <title>Identification of two SET domain proteins required for methylation of lysine residues in yeast ribosomal protein Rpl42ab.</title>
        <authorList>
            <person name="Webb K.J."/>
            <person name="Laganowsky A."/>
            <person name="Whitelegge J.P."/>
            <person name="Clarke S.G."/>
        </authorList>
    </citation>
    <scope>FUNCTION</scope>
</reference>
<reference key="10">
    <citation type="journal article" date="2014" name="J. Proteome Res.">
        <title>Stoichiometry of Saccharomyces cerevisiae lysine methylation: insights into non-histone protein lysine methyltransferase activity.</title>
        <authorList>
            <person name="Hart-Smith G."/>
            <person name="Chia S.Z."/>
            <person name="Low J.K."/>
            <person name="McKay M.J."/>
            <person name="Molloy M.P."/>
            <person name="Wilkins M.R."/>
        </authorList>
    </citation>
    <scope>FUNCTION</scope>
</reference>
<accession>Q12504</accession>
<accession>D6VSN7</accession>
<accession>Q07015</accession>
<name>RKM4_YEAST</name>
<feature type="chain" id="PRO_0000097367" description="Ribosomal lysine N-methyltransferase 4">
    <location>
        <begin position="1"/>
        <end position="494"/>
    </location>
</feature>
<feature type="domain" description="SET" evidence="1">
    <location>
        <begin position="25"/>
        <end position="265"/>
    </location>
</feature>
<feature type="binding site" evidence="1">
    <location>
        <position position="264"/>
    </location>
    <ligand>
        <name>S-adenosyl-L-methionine</name>
        <dbReference type="ChEBI" id="CHEBI:59789"/>
    </ligand>
</feature>
<feature type="sequence conflict" description="In Ref. 5; L16533." evidence="8" ref="5">
    <original>NFVC</original>
    <variation>KLCF</variation>
    <location>
        <begin position="10"/>
        <end position="13"/>
    </location>
</feature>
<feature type="sequence conflict" description="In Ref. 1; CAA86307." evidence="8" ref="1">
    <original>RVATSFE</original>
    <variation>TCVANCPSK</variation>
    <location>
        <begin position="168"/>
        <end position="174"/>
    </location>
</feature>
<sequence>MDDFSRDTENFVCWLKTTAEIEVSPKIEIKDLCCDNQGRAVVATQKIKKDETLFKIPRSSVLSVTTSQLIKDYPSLKDKFLNETGSWEGLIICILYEMEVLQERSRWAPYFKVWNKPSDMNALIFWDDNELQLLKPSLVLERIGKKEAKEMHERIIKSIKQIGGEFSRVATSFEFDNFAYIASIILSYSFDLEMQDSSVNENEEEETSEEELENERYLKSMIPLADMLNADTSKCNANLTYDSNCLKMVALRDIEKNEQVYNIYGEHPNSELLRRYGYVEWDGSKYDFGEVLLENIVEALKETFETNTEFLDRCIDILRNNANIQEFLEGEEIVLDSYDCYNNGELLPQLILLVQILTILCQIPGLCKLDIKAMERQVERIVKKCLQLIEGARATTNCSATWKRCIMKRLADYPIKKCVSIEKPSKGNSLTREELRDVMARRVLKSEIDSLQVCEETIDKNYKVIPDEKLLTNILKRKLTEEEKSSVKRPCVKK</sequence>
<gene>
    <name evidence="7" type="primary">RKM4</name>
    <name evidence="9" type="synonym">RMS1</name>
    <name evidence="6" type="synonym">SET7</name>
    <name evidence="10" type="ordered locus">YDR257C</name>
    <name type="ORF">YD9320A.07C</name>
</gene>
<organism>
    <name type="scientific">Saccharomyces cerevisiae (strain ATCC 204508 / S288c)</name>
    <name type="common">Baker's yeast</name>
    <dbReference type="NCBI Taxonomy" id="559292"/>
    <lineage>
        <taxon>Eukaryota</taxon>
        <taxon>Fungi</taxon>
        <taxon>Dikarya</taxon>
        <taxon>Ascomycota</taxon>
        <taxon>Saccharomycotina</taxon>
        <taxon>Saccharomycetes</taxon>
        <taxon>Saccharomycetales</taxon>
        <taxon>Saccharomycetaceae</taxon>
        <taxon>Saccharomyces</taxon>
    </lineage>
</organism>
<proteinExistence type="evidence at protein level"/>
<protein>
    <recommendedName>
        <fullName evidence="7">Ribosomal lysine N-methyltransferase 4</fullName>
        <ecNumber evidence="4 5">2.1.1.-</ecNumber>
    </recommendedName>
    <alternativeName>
        <fullName evidence="6">SET domain-containing protein 7</fullName>
    </alternativeName>
</protein>
<keyword id="KW-0489">Methyltransferase</keyword>
<keyword id="KW-0539">Nucleus</keyword>
<keyword id="KW-1185">Reference proteome</keyword>
<keyword id="KW-0949">S-adenosyl-L-methionine</keyword>
<keyword id="KW-0808">Transferase</keyword>
<comment type="function">
    <text evidence="4 5">S-adenosyl-L-methionine-dependent protein-lysine N-methyltransferase that monomethylates 60S ribosomal protein L42 (RPL42A and RPL42B) at 'Lys-55'.</text>
</comment>
<comment type="subcellular location">
    <subcellularLocation>
        <location evidence="2">Nucleus</location>
    </subcellularLocation>
</comment>
<comment type="miscellaneous">
    <text evidence="3">Present with 4010 molecules/cell in log phase SD medium.</text>
</comment>
<comment type="similarity">
    <text evidence="1 8">Belongs to the class V-like SAM-binding methyltransferase superfamily. Histone-lysine methyltransferase family. SETD6 subfamily.</text>
</comment>
<dbReference type="EC" id="2.1.1.-" evidence="4 5"/>
<dbReference type="EMBL" id="Z46237">
    <property type="protein sequence ID" value="CAA86307.1"/>
    <property type="molecule type" value="Genomic_DNA"/>
</dbReference>
<dbReference type="EMBL" id="Z70202">
    <property type="protein sequence ID" value="CAA94096.1"/>
    <property type="molecule type" value="Genomic_DNA"/>
</dbReference>
<dbReference type="EMBL" id="Z68329">
    <property type="protein sequence ID" value="CAA92714.1"/>
    <property type="molecule type" value="Genomic_DNA"/>
</dbReference>
<dbReference type="EMBL" id="AY723787">
    <property type="protein sequence ID" value="AAU09704.1"/>
    <property type="molecule type" value="Genomic_DNA"/>
</dbReference>
<dbReference type="EMBL" id="L16533">
    <property type="status" value="NOT_ANNOTATED_CDS"/>
    <property type="molecule type" value="Unassigned_DNA"/>
</dbReference>
<dbReference type="EMBL" id="BK006938">
    <property type="protein sequence ID" value="DAA12097.1"/>
    <property type="molecule type" value="Genomic_DNA"/>
</dbReference>
<dbReference type="PIR" id="S67314">
    <property type="entry name" value="S67314"/>
</dbReference>
<dbReference type="RefSeq" id="NP_010543.1">
    <property type="nucleotide sequence ID" value="NM_001180565.1"/>
</dbReference>
<dbReference type="SMR" id="Q12504"/>
<dbReference type="BioGRID" id="32307">
    <property type="interactions" value="109"/>
</dbReference>
<dbReference type="FunCoup" id="Q12504">
    <property type="interactions" value="339"/>
</dbReference>
<dbReference type="IntAct" id="Q12504">
    <property type="interactions" value="32"/>
</dbReference>
<dbReference type="STRING" id="4932.YDR257C"/>
<dbReference type="iPTMnet" id="Q12504"/>
<dbReference type="PaxDb" id="4932-YDR257C"/>
<dbReference type="PeptideAtlas" id="Q12504"/>
<dbReference type="EnsemblFungi" id="YDR257C_mRNA">
    <property type="protein sequence ID" value="YDR257C"/>
    <property type="gene ID" value="YDR257C"/>
</dbReference>
<dbReference type="GeneID" id="851844"/>
<dbReference type="KEGG" id="sce:YDR257C"/>
<dbReference type="AGR" id="SGD:S000002665"/>
<dbReference type="SGD" id="S000002665">
    <property type="gene designation" value="RKM4"/>
</dbReference>
<dbReference type="VEuPathDB" id="FungiDB:YDR257C"/>
<dbReference type="eggNOG" id="KOG1338">
    <property type="taxonomic scope" value="Eukaryota"/>
</dbReference>
<dbReference type="GeneTree" id="ENSGT00940000153577"/>
<dbReference type="HOGENOM" id="CLU_017135_0_0_1"/>
<dbReference type="InParanoid" id="Q12504"/>
<dbReference type="OMA" id="WEGLIIC"/>
<dbReference type="OrthoDB" id="341421at2759"/>
<dbReference type="BioCyc" id="YEAST:G3O-29828-MONOMER"/>
<dbReference type="BioGRID-ORCS" id="851844">
    <property type="hits" value="0 hits in 10 CRISPR screens"/>
</dbReference>
<dbReference type="ChiTaRS" id="RKM4">
    <property type="organism name" value="yeast"/>
</dbReference>
<dbReference type="PRO" id="PR:Q12504"/>
<dbReference type="Proteomes" id="UP000002311">
    <property type="component" value="Chromosome IV"/>
</dbReference>
<dbReference type="RNAct" id="Q12504">
    <property type="molecule type" value="protein"/>
</dbReference>
<dbReference type="GO" id="GO:0005634">
    <property type="term" value="C:nucleus"/>
    <property type="evidence" value="ECO:0007005"/>
    <property type="project" value="SGD"/>
</dbReference>
<dbReference type="GO" id="GO:0016279">
    <property type="term" value="F:protein-lysine N-methyltransferase activity"/>
    <property type="evidence" value="ECO:0000315"/>
    <property type="project" value="SGD"/>
</dbReference>
<dbReference type="GO" id="GO:0032259">
    <property type="term" value="P:methylation"/>
    <property type="evidence" value="ECO:0007669"/>
    <property type="project" value="UniProtKB-KW"/>
</dbReference>
<dbReference type="CDD" id="cd19178">
    <property type="entry name" value="SET_SETD6"/>
    <property type="match status" value="1"/>
</dbReference>
<dbReference type="FunFam" id="3.90.1410.10:FF:000007">
    <property type="entry name" value="Ribosomal lysine N-methyltransferase 4"/>
    <property type="match status" value="1"/>
</dbReference>
<dbReference type="Gene3D" id="3.90.1410.10">
    <property type="entry name" value="set domain protein methyltransferase, domain 1"/>
    <property type="match status" value="1"/>
</dbReference>
<dbReference type="InterPro" id="IPR011383">
    <property type="entry name" value="N-lys_methylase_SETD6"/>
</dbReference>
<dbReference type="InterPro" id="IPR001214">
    <property type="entry name" value="SET_dom"/>
</dbReference>
<dbReference type="InterPro" id="IPR046341">
    <property type="entry name" value="SET_dom_sf"/>
</dbReference>
<dbReference type="InterPro" id="IPR050600">
    <property type="entry name" value="SETD3_SETD6_MTase"/>
</dbReference>
<dbReference type="InterPro" id="IPR044430">
    <property type="entry name" value="SETD6_SET"/>
</dbReference>
<dbReference type="PANTHER" id="PTHR13271:SF34">
    <property type="entry name" value="N-LYSINE METHYLTRANSFERASE SETD6"/>
    <property type="match status" value="1"/>
</dbReference>
<dbReference type="PANTHER" id="PTHR13271">
    <property type="entry name" value="UNCHARACTERIZED PUTATIVE METHYLTRANSFERASE"/>
    <property type="match status" value="1"/>
</dbReference>
<dbReference type="Pfam" id="PF00856">
    <property type="entry name" value="SET"/>
    <property type="match status" value="1"/>
</dbReference>
<dbReference type="PIRSF" id="PIRSF011771">
    <property type="entry name" value="RMS1_SET"/>
    <property type="match status" value="1"/>
</dbReference>
<dbReference type="SUPFAM" id="SSF82199">
    <property type="entry name" value="SET domain"/>
    <property type="match status" value="1"/>
</dbReference>
<dbReference type="PROSITE" id="PS50280">
    <property type="entry name" value="SET"/>
    <property type="match status" value="1"/>
</dbReference>